<evidence type="ECO:0000250" key="1"/>
<evidence type="ECO:0000250" key="2">
    <source>
        <dbReference type="UniProtKB" id="P13382"/>
    </source>
</evidence>
<evidence type="ECO:0000255" key="3"/>
<evidence type="ECO:0000256" key="4">
    <source>
        <dbReference type="SAM" id="MobiDB-lite"/>
    </source>
</evidence>
<evidence type="ECO:0000305" key="5"/>
<comment type="function">
    <text evidence="1">Polymerase alpha in a complex with DNA primase is a replicative polymerase.</text>
</comment>
<comment type="catalytic activity">
    <reaction>
        <text>DNA(n) + a 2'-deoxyribonucleoside 5'-triphosphate = DNA(n+1) + diphosphate</text>
        <dbReference type="Rhea" id="RHEA:22508"/>
        <dbReference type="Rhea" id="RHEA-COMP:17339"/>
        <dbReference type="Rhea" id="RHEA-COMP:17340"/>
        <dbReference type="ChEBI" id="CHEBI:33019"/>
        <dbReference type="ChEBI" id="CHEBI:61560"/>
        <dbReference type="ChEBI" id="CHEBI:173112"/>
        <dbReference type="EC" id="2.7.7.7"/>
    </reaction>
</comment>
<comment type="subcellular location">
    <subcellularLocation>
        <location evidence="1">Nucleus</location>
    </subcellularLocation>
</comment>
<comment type="miscellaneous">
    <text>In eukaryotes there are five DNA polymerases: alpha, beta, gamma, delta, and epsilon which are responsible for different reactions of DNA synthesis.</text>
</comment>
<comment type="similarity">
    <text evidence="5">Belongs to the DNA polymerase type-B family.</text>
</comment>
<sequence length="1509" mass="172818">MNRPKREKKSITDVSTLKSLEQIKRARDGEKRTDQLQEEDDERKRLEQLKEQETEFDKEERKRKNRDFIEGDSGYRETSDNEDEDEDEDDDGDNSDDDYSLDEDDEDGGGDGENNDSDQEEAIEVGRKKKRQVKKKSKKDENGEPKVKTPRVKKTKEKKNEIVPEKNRIIQFINNPTESKSTSNNESFFFDKLKKSNSNTLNSTNSTLNSNELSSGGTMSSLDIESMLNDLQSAPDSELDLEKLKEKQLELEKKLEKEALLNKPTISTETIITEGVELDDNYEFDFDFNNPITTNNNNNNNTKTTTTTTTTTITNKNLNKVNSMSLPTRPQAQQFISPKQTNQEDWWSKTGVDSVVLVKKLEEIMPKNSDLLKMNMDGSLDFFLLTTEEDKQGRIILFGKVKLQASKSNKPGGGGGATKQTSITDEPVTKVPLKYASCCIIIEKMERNVFFLPRDYKLDQDGESTTIQVTDTMIEAELKQLVDRSKIKDYKLKKVKRTSAFDYSVPHKNGPVGEQHYVWKLSYPSNQMVFPNDIKGSTFRCAYGITSSPVELFLIKRKIMGPTWLTVSGITLNFDQKKSFARYEATVKSFKSIKPSMYKNEPSPPLTVMSISTKSVMKGSSHEVVMISSVIHESISADGPTENQDSIKYITAIRPLTGQVFPPDFQKPGASTTKQNVTICTSERNLLSFFCETVLNADPDVFAGHNIIGYDIEVILDRLEKLKVMEWAFIGRLKRSSFDRFNHISGRLICDSYLVCKEFLPKEKNYSLVELSKNQLSINKPEINYLSIEPYFETTKKLNIFIEINENDCYIIFLLIFKLLVFPLTKQLTNLAGNQWDKSLKSNRAERIEYLLLHNFHEKKYLLPDKIYQKSSSSGGGGGAKDKDNHAAYSGGLVLDPKIDFYDRYVVLLDFNSLYPSIIQEYNVCFTTINRVKRDDGKWEEAMPPPSSIEKGILPKVLHGLVSKRREIKKRMEQEKNKIIKAQYDIQQQAVKLIANSMYGCLGFSHSRFYALPLAELVTRKGRENLQKGASIVNKMCYDVIYGDTDSLMIYTGVGTFNEAETIGKEIQKKINDQYRGSVMEIGLDGIFKRLLLFKKKKYACLKEFRIDSTTTKCERENKGIDIVRRDYCDLTKDIGQWVLNLILGGEEKIALFSLIKEYLESVQQQIKDNTLAVEKFIITKTLSKQPEEYNDADIQPHVQVALQMRAKGLHVQPGEQVPYIITHGNSSSDIKEEWHHRARAPSDVESIQDVDIDWYLSQQILPSIQRNTGPIGMEPHELAQWLGMTGTKYQKQFDHLQQQSNQDFKPRYTLSTEDLRYKQCKSFNFECPYCGQNNEFTGIVKIDSEGKSESGFDCNQCHAKIPLKKLANQLQLNIRTYLKQYNDWDLRCTECEKVSKNYKETSYRCARPQCRGKMIQIMTSSKLFNQISFFSKLFRNDLSNSDNTTTIIPNEDQNTLKQAKQIIDSFLSKFDQYNVNLNSLLTPSQTLDSFNNYLASSRASIQYPILNK</sequence>
<accession>Q54SV8</accession>
<dbReference type="EC" id="2.7.7.7"/>
<dbReference type="EMBL" id="AAFI02000046">
    <property type="protein sequence ID" value="EAL66301.1"/>
    <property type="molecule type" value="Genomic_DNA"/>
</dbReference>
<dbReference type="RefSeq" id="XP_640277.1">
    <property type="nucleotide sequence ID" value="XM_635185.1"/>
</dbReference>
<dbReference type="SMR" id="Q54SV8"/>
<dbReference type="FunCoup" id="Q54SV8">
    <property type="interactions" value="613"/>
</dbReference>
<dbReference type="STRING" id="44689.Q54SV8"/>
<dbReference type="PaxDb" id="44689-DDB0232274"/>
<dbReference type="EnsemblProtists" id="EAL66301">
    <property type="protein sequence ID" value="EAL66301"/>
    <property type="gene ID" value="DDB_G0282191"/>
</dbReference>
<dbReference type="GeneID" id="8623451"/>
<dbReference type="KEGG" id="ddi:DDB_G0282191"/>
<dbReference type="dictyBase" id="DDB_G0282191">
    <property type="gene designation" value="polA1"/>
</dbReference>
<dbReference type="VEuPathDB" id="AmoebaDB:DDB_G0282191"/>
<dbReference type="eggNOG" id="KOG0970">
    <property type="taxonomic scope" value="Eukaryota"/>
</dbReference>
<dbReference type="HOGENOM" id="CLU_001718_0_0_1"/>
<dbReference type="InParanoid" id="Q54SV8"/>
<dbReference type="OMA" id="MTKMNVG"/>
<dbReference type="PhylomeDB" id="Q54SV8"/>
<dbReference type="Reactome" id="R-DDI-113501">
    <property type="pathway name" value="Inhibition of replication initiation of damaged DNA by RB1/E2F1"/>
</dbReference>
<dbReference type="Reactome" id="R-DDI-68952">
    <property type="pathway name" value="DNA replication initiation"/>
</dbReference>
<dbReference type="Reactome" id="R-DDI-68962">
    <property type="pathway name" value="Activation of the pre-replicative complex"/>
</dbReference>
<dbReference type="Reactome" id="R-DDI-69091">
    <property type="pathway name" value="Polymerase switching"/>
</dbReference>
<dbReference type="Reactome" id="R-DDI-69166">
    <property type="pathway name" value="Removal of the Flap Intermediate"/>
</dbReference>
<dbReference type="Reactome" id="R-DDI-69183">
    <property type="pathway name" value="Processive synthesis on the lagging strand"/>
</dbReference>
<dbReference type="PRO" id="PR:Q54SV8"/>
<dbReference type="Proteomes" id="UP000002195">
    <property type="component" value="Chromosome 3"/>
</dbReference>
<dbReference type="GO" id="GO:0005658">
    <property type="term" value="C:alpha DNA polymerase:primase complex"/>
    <property type="evidence" value="ECO:0000250"/>
    <property type="project" value="dictyBase"/>
</dbReference>
<dbReference type="GO" id="GO:0003682">
    <property type="term" value="F:chromatin binding"/>
    <property type="evidence" value="ECO:0000318"/>
    <property type="project" value="GO_Central"/>
</dbReference>
<dbReference type="GO" id="GO:0003688">
    <property type="term" value="F:DNA replication origin binding"/>
    <property type="evidence" value="ECO:0000318"/>
    <property type="project" value="GO_Central"/>
</dbReference>
<dbReference type="GO" id="GO:0003887">
    <property type="term" value="F:DNA-directed DNA polymerase activity"/>
    <property type="evidence" value="ECO:0000318"/>
    <property type="project" value="GO_Central"/>
</dbReference>
<dbReference type="GO" id="GO:0000166">
    <property type="term" value="F:nucleotide binding"/>
    <property type="evidence" value="ECO:0000250"/>
    <property type="project" value="dictyBase"/>
</dbReference>
<dbReference type="GO" id="GO:0003697">
    <property type="term" value="F:single-stranded DNA binding"/>
    <property type="evidence" value="ECO:0000318"/>
    <property type="project" value="GO_Central"/>
</dbReference>
<dbReference type="GO" id="GO:0008270">
    <property type="term" value="F:zinc ion binding"/>
    <property type="evidence" value="ECO:0007669"/>
    <property type="project" value="UniProtKB-KW"/>
</dbReference>
<dbReference type="GO" id="GO:0006270">
    <property type="term" value="P:DNA replication initiation"/>
    <property type="evidence" value="ECO:0000250"/>
    <property type="project" value="dictyBase"/>
</dbReference>
<dbReference type="GO" id="GO:0000731">
    <property type="term" value="P:DNA synthesis involved in DNA repair"/>
    <property type="evidence" value="ECO:0000250"/>
    <property type="project" value="dictyBase"/>
</dbReference>
<dbReference type="GO" id="GO:0006273">
    <property type="term" value="P:lagging strand elongation"/>
    <property type="evidence" value="ECO:0000250"/>
    <property type="project" value="dictyBase"/>
</dbReference>
<dbReference type="GO" id="GO:0006272">
    <property type="term" value="P:leading strand elongation"/>
    <property type="evidence" value="ECO:0000250"/>
    <property type="project" value="dictyBase"/>
</dbReference>
<dbReference type="GO" id="GO:1902975">
    <property type="term" value="P:mitotic DNA replication initiation"/>
    <property type="evidence" value="ECO:0000318"/>
    <property type="project" value="GO_Central"/>
</dbReference>
<dbReference type="CDD" id="cd05776">
    <property type="entry name" value="DNA_polB_alpha_exo"/>
    <property type="match status" value="1"/>
</dbReference>
<dbReference type="CDD" id="cd05532">
    <property type="entry name" value="POLBc_alpha"/>
    <property type="match status" value="1"/>
</dbReference>
<dbReference type="FunFam" id="1.10.3200.20:FF:000009">
    <property type="match status" value="1"/>
</dbReference>
<dbReference type="FunFam" id="1.10.132.60:FF:000004">
    <property type="entry name" value="DNA polymerase"/>
    <property type="match status" value="1"/>
</dbReference>
<dbReference type="FunFam" id="3.90.1600.10:FF:000023">
    <property type="entry name" value="DNA polymerase"/>
    <property type="match status" value="1"/>
</dbReference>
<dbReference type="Gene3D" id="2.40.50.730">
    <property type="match status" value="1"/>
</dbReference>
<dbReference type="Gene3D" id="3.30.70.2820">
    <property type="match status" value="1"/>
</dbReference>
<dbReference type="Gene3D" id="1.10.3200.20">
    <property type="entry name" value="DNA Polymerase alpha, zinc finger"/>
    <property type="match status" value="1"/>
</dbReference>
<dbReference type="Gene3D" id="1.10.132.60">
    <property type="entry name" value="DNA polymerase family B, C-terminal domain"/>
    <property type="match status" value="1"/>
</dbReference>
<dbReference type="Gene3D" id="3.90.1600.10">
    <property type="entry name" value="Palm domain of DNA polymerase"/>
    <property type="match status" value="2"/>
</dbReference>
<dbReference type="Gene3D" id="3.30.420.10">
    <property type="entry name" value="Ribonuclease H-like superfamily/Ribonuclease H"/>
    <property type="match status" value="1"/>
</dbReference>
<dbReference type="InterPro" id="IPR006172">
    <property type="entry name" value="DNA-dir_DNA_pol_B"/>
</dbReference>
<dbReference type="InterPro" id="IPR017964">
    <property type="entry name" value="DNA-dir_DNA_pol_B_CS"/>
</dbReference>
<dbReference type="InterPro" id="IPR006133">
    <property type="entry name" value="DNA-dir_DNA_pol_B_exonuc"/>
</dbReference>
<dbReference type="InterPro" id="IPR006134">
    <property type="entry name" value="DNA-dir_DNA_pol_B_multi_dom"/>
</dbReference>
<dbReference type="InterPro" id="IPR043502">
    <property type="entry name" value="DNA/RNA_pol_sf"/>
</dbReference>
<dbReference type="InterPro" id="IPR042087">
    <property type="entry name" value="DNA_pol_B_thumb"/>
</dbReference>
<dbReference type="InterPro" id="IPR023211">
    <property type="entry name" value="DNA_pol_palm_dom_sf"/>
</dbReference>
<dbReference type="InterPro" id="IPR038256">
    <property type="entry name" value="Pol_alpha_znc_sf"/>
</dbReference>
<dbReference type="InterPro" id="IPR045846">
    <property type="entry name" value="POLBc_alpha"/>
</dbReference>
<dbReference type="InterPro" id="IPR012337">
    <property type="entry name" value="RNaseH-like_sf"/>
</dbReference>
<dbReference type="InterPro" id="IPR036397">
    <property type="entry name" value="RNaseH_sf"/>
</dbReference>
<dbReference type="InterPro" id="IPR015088">
    <property type="entry name" value="Znf_DNA-dir_DNA_pol_B_alpha"/>
</dbReference>
<dbReference type="NCBIfam" id="TIGR00592">
    <property type="entry name" value="pol2"/>
    <property type="match status" value="1"/>
</dbReference>
<dbReference type="PANTHER" id="PTHR45861">
    <property type="entry name" value="DNA POLYMERASE ALPHA CATALYTIC SUBUNIT"/>
    <property type="match status" value="1"/>
</dbReference>
<dbReference type="PANTHER" id="PTHR45861:SF1">
    <property type="entry name" value="DNA POLYMERASE ALPHA CATALYTIC SUBUNIT"/>
    <property type="match status" value="1"/>
</dbReference>
<dbReference type="Pfam" id="PF00136">
    <property type="entry name" value="DNA_pol_B"/>
    <property type="match status" value="1"/>
</dbReference>
<dbReference type="Pfam" id="PF03104">
    <property type="entry name" value="DNA_pol_B_exo1"/>
    <property type="match status" value="1"/>
</dbReference>
<dbReference type="Pfam" id="PF08996">
    <property type="entry name" value="zf-DNA_Pol"/>
    <property type="match status" value="1"/>
</dbReference>
<dbReference type="PRINTS" id="PR00106">
    <property type="entry name" value="DNAPOLB"/>
</dbReference>
<dbReference type="SMART" id="SM00486">
    <property type="entry name" value="POLBc"/>
    <property type="match status" value="1"/>
</dbReference>
<dbReference type="SUPFAM" id="SSF56672">
    <property type="entry name" value="DNA/RNA polymerases"/>
    <property type="match status" value="1"/>
</dbReference>
<dbReference type="SUPFAM" id="SSF53098">
    <property type="entry name" value="Ribonuclease H-like"/>
    <property type="match status" value="1"/>
</dbReference>
<dbReference type="PROSITE" id="PS00116">
    <property type="entry name" value="DNA_POLYMERASE_B"/>
    <property type="match status" value="1"/>
</dbReference>
<keyword id="KW-0175">Coiled coil</keyword>
<keyword id="KW-0235">DNA replication</keyword>
<keyword id="KW-0238">DNA-binding</keyword>
<keyword id="KW-0239">DNA-directed DNA polymerase</keyword>
<keyword id="KW-0479">Metal-binding</keyword>
<keyword id="KW-0548">Nucleotidyltransferase</keyword>
<keyword id="KW-0539">Nucleus</keyword>
<keyword id="KW-1185">Reference proteome</keyword>
<keyword id="KW-0808">Transferase</keyword>
<keyword id="KW-0862">Zinc</keyword>
<keyword id="KW-0863">Zinc-finger</keyword>
<feature type="chain" id="PRO_0000327697" description="DNA polymerase alpha catalytic subunit">
    <location>
        <begin position="1"/>
        <end position="1509"/>
    </location>
</feature>
<feature type="zinc finger region" description="CysA-type">
    <location>
        <begin position="1328"/>
        <end position="1358"/>
    </location>
</feature>
<feature type="region of interest" description="Disordered" evidence="4">
    <location>
        <begin position="1"/>
        <end position="162"/>
    </location>
</feature>
<feature type="coiled-coil region" evidence="3">
    <location>
        <begin position="27"/>
        <end position="67"/>
    </location>
</feature>
<feature type="coiled-coil region" evidence="3">
    <location>
        <begin position="234"/>
        <end position="263"/>
    </location>
</feature>
<feature type="coiled-coil region" evidence="3">
    <location>
        <begin position="958"/>
        <end position="989"/>
    </location>
</feature>
<feature type="short sequence motif" description="CysB motif">
    <location>
        <begin position="1389"/>
        <end position="1411"/>
    </location>
</feature>
<feature type="compositionally biased region" description="Basic and acidic residues" evidence="4">
    <location>
        <begin position="21"/>
        <end position="35"/>
    </location>
</feature>
<feature type="compositionally biased region" description="Basic and acidic residues" evidence="4">
    <location>
        <begin position="42"/>
        <end position="79"/>
    </location>
</feature>
<feature type="compositionally biased region" description="Acidic residues" evidence="4">
    <location>
        <begin position="80"/>
        <end position="123"/>
    </location>
</feature>
<feature type="compositionally biased region" description="Basic residues" evidence="4">
    <location>
        <begin position="127"/>
        <end position="137"/>
    </location>
</feature>
<feature type="compositionally biased region" description="Basic and acidic residues" evidence="4">
    <location>
        <begin position="138"/>
        <end position="147"/>
    </location>
</feature>
<feature type="compositionally biased region" description="Basic residues" evidence="4">
    <location>
        <begin position="148"/>
        <end position="157"/>
    </location>
</feature>
<feature type="binding site" evidence="2">
    <location>
        <position position="1328"/>
    </location>
    <ligand>
        <name>Zn(2+)</name>
        <dbReference type="ChEBI" id="CHEBI:29105"/>
        <label>1</label>
    </ligand>
</feature>
<feature type="binding site" evidence="2">
    <location>
        <position position="1331"/>
    </location>
    <ligand>
        <name>Zn(2+)</name>
        <dbReference type="ChEBI" id="CHEBI:29105"/>
        <label>1</label>
    </ligand>
</feature>
<feature type="binding site" evidence="2">
    <location>
        <position position="1355"/>
    </location>
    <ligand>
        <name>Zn(2+)</name>
        <dbReference type="ChEBI" id="CHEBI:29105"/>
        <label>1</label>
    </ligand>
</feature>
<feature type="binding site" evidence="2">
    <location>
        <position position="1358"/>
    </location>
    <ligand>
        <name>Zn(2+)</name>
        <dbReference type="ChEBI" id="CHEBI:29105"/>
        <label>1</label>
    </ligand>
</feature>
<feature type="binding site" evidence="2">
    <location>
        <position position="1389"/>
    </location>
    <ligand>
        <name>Zn(2+)</name>
        <dbReference type="ChEBI" id="CHEBI:29105"/>
        <label>2</label>
    </ligand>
</feature>
<feature type="binding site" evidence="2">
    <location>
        <position position="1392"/>
    </location>
    <ligand>
        <name>Zn(2+)</name>
        <dbReference type="ChEBI" id="CHEBI:29105"/>
        <label>2</label>
    </ligand>
</feature>
<feature type="binding site" evidence="2">
    <location>
        <position position="1406"/>
    </location>
    <ligand>
        <name>Zn(2+)</name>
        <dbReference type="ChEBI" id="CHEBI:29105"/>
        <label>2</label>
    </ligand>
</feature>
<feature type="binding site" evidence="2">
    <location>
        <position position="1411"/>
    </location>
    <ligand>
        <name>Zn(2+)</name>
        <dbReference type="ChEBI" id="CHEBI:29105"/>
        <label>2</label>
    </ligand>
</feature>
<gene>
    <name type="primary">pola1</name>
    <name type="ORF">DDB_G0282191</name>
</gene>
<name>DPOLA_DICDI</name>
<proteinExistence type="inferred from homology"/>
<reference key="1">
    <citation type="journal article" date="2005" name="Nature">
        <title>The genome of the social amoeba Dictyostelium discoideum.</title>
        <authorList>
            <person name="Eichinger L."/>
            <person name="Pachebat J.A."/>
            <person name="Gloeckner G."/>
            <person name="Rajandream M.A."/>
            <person name="Sucgang R."/>
            <person name="Berriman M."/>
            <person name="Song J."/>
            <person name="Olsen R."/>
            <person name="Szafranski K."/>
            <person name="Xu Q."/>
            <person name="Tunggal B."/>
            <person name="Kummerfeld S."/>
            <person name="Madera M."/>
            <person name="Konfortov B.A."/>
            <person name="Rivero F."/>
            <person name="Bankier A.T."/>
            <person name="Lehmann R."/>
            <person name="Hamlin N."/>
            <person name="Davies R."/>
            <person name="Gaudet P."/>
            <person name="Fey P."/>
            <person name="Pilcher K."/>
            <person name="Chen G."/>
            <person name="Saunders D."/>
            <person name="Sodergren E.J."/>
            <person name="Davis P."/>
            <person name="Kerhornou A."/>
            <person name="Nie X."/>
            <person name="Hall N."/>
            <person name="Anjard C."/>
            <person name="Hemphill L."/>
            <person name="Bason N."/>
            <person name="Farbrother P."/>
            <person name="Desany B."/>
            <person name="Just E."/>
            <person name="Morio T."/>
            <person name="Rost R."/>
            <person name="Churcher C.M."/>
            <person name="Cooper J."/>
            <person name="Haydock S."/>
            <person name="van Driessche N."/>
            <person name="Cronin A."/>
            <person name="Goodhead I."/>
            <person name="Muzny D.M."/>
            <person name="Mourier T."/>
            <person name="Pain A."/>
            <person name="Lu M."/>
            <person name="Harper D."/>
            <person name="Lindsay R."/>
            <person name="Hauser H."/>
            <person name="James K.D."/>
            <person name="Quiles M."/>
            <person name="Madan Babu M."/>
            <person name="Saito T."/>
            <person name="Buchrieser C."/>
            <person name="Wardroper A."/>
            <person name="Felder M."/>
            <person name="Thangavelu M."/>
            <person name="Johnson D."/>
            <person name="Knights A."/>
            <person name="Loulseged H."/>
            <person name="Mungall K.L."/>
            <person name="Oliver K."/>
            <person name="Price C."/>
            <person name="Quail M.A."/>
            <person name="Urushihara H."/>
            <person name="Hernandez J."/>
            <person name="Rabbinowitsch E."/>
            <person name="Steffen D."/>
            <person name="Sanders M."/>
            <person name="Ma J."/>
            <person name="Kohara Y."/>
            <person name="Sharp S."/>
            <person name="Simmonds M.N."/>
            <person name="Spiegler S."/>
            <person name="Tivey A."/>
            <person name="Sugano S."/>
            <person name="White B."/>
            <person name="Walker D."/>
            <person name="Woodward J.R."/>
            <person name="Winckler T."/>
            <person name="Tanaka Y."/>
            <person name="Shaulsky G."/>
            <person name="Schleicher M."/>
            <person name="Weinstock G.M."/>
            <person name="Rosenthal A."/>
            <person name="Cox E.C."/>
            <person name="Chisholm R.L."/>
            <person name="Gibbs R.A."/>
            <person name="Loomis W.F."/>
            <person name="Platzer M."/>
            <person name="Kay R.R."/>
            <person name="Williams J.G."/>
            <person name="Dear P.H."/>
            <person name="Noegel A.A."/>
            <person name="Barrell B.G."/>
            <person name="Kuspa A."/>
        </authorList>
    </citation>
    <scope>NUCLEOTIDE SEQUENCE [LARGE SCALE GENOMIC DNA]</scope>
    <source>
        <strain>AX4</strain>
    </source>
</reference>
<protein>
    <recommendedName>
        <fullName>DNA polymerase alpha catalytic subunit</fullName>
        <ecNumber>2.7.7.7</ecNumber>
    </recommendedName>
</protein>
<organism>
    <name type="scientific">Dictyostelium discoideum</name>
    <name type="common">Social amoeba</name>
    <dbReference type="NCBI Taxonomy" id="44689"/>
    <lineage>
        <taxon>Eukaryota</taxon>
        <taxon>Amoebozoa</taxon>
        <taxon>Evosea</taxon>
        <taxon>Eumycetozoa</taxon>
        <taxon>Dictyostelia</taxon>
        <taxon>Dictyosteliales</taxon>
        <taxon>Dictyosteliaceae</taxon>
        <taxon>Dictyostelium</taxon>
    </lineage>
</organism>